<protein>
    <recommendedName>
        <fullName>Protein GREB1</fullName>
    </recommendedName>
</protein>
<reference key="1">
    <citation type="journal article" date="1999" name="Genomics">
        <title>Genetic, physical, and transcript map of the fld region on mouse chromosome 12.</title>
        <authorList>
            <person name="Peterfy M."/>
            <person name="Phan J."/>
            <person name="Oswell G.M."/>
            <person name="Xu P."/>
            <person name="Reue K."/>
        </authorList>
    </citation>
    <scope>NUCLEOTIDE SEQUENCE [MRNA]</scope>
    <source>
        <strain>BALB/cJ</strain>
    </source>
</reference>
<reference key="2">
    <citation type="journal article" date="2005" name="Science">
        <title>The transcriptional landscape of the mammalian genome.</title>
        <authorList>
            <person name="Carninci P."/>
            <person name="Kasukawa T."/>
            <person name="Katayama S."/>
            <person name="Gough J."/>
            <person name="Frith M.C."/>
            <person name="Maeda N."/>
            <person name="Oyama R."/>
            <person name="Ravasi T."/>
            <person name="Lenhard B."/>
            <person name="Wells C."/>
            <person name="Kodzius R."/>
            <person name="Shimokawa K."/>
            <person name="Bajic V.B."/>
            <person name="Brenner S.E."/>
            <person name="Batalov S."/>
            <person name="Forrest A.R."/>
            <person name="Zavolan M."/>
            <person name="Davis M.J."/>
            <person name="Wilming L.G."/>
            <person name="Aidinis V."/>
            <person name="Allen J.E."/>
            <person name="Ambesi-Impiombato A."/>
            <person name="Apweiler R."/>
            <person name="Aturaliya R.N."/>
            <person name="Bailey T.L."/>
            <person name="Bansal M."/>
            <person name="Baxter L."/>
            <person name="Beisel K.W."/>
            <person name="Bersano T."/>
            <person name="Bono H."/>
            <person name="Chalk A.M."/>
            <person name="Chiu K.P."/>
            <person name="Choudhary V."/>
            <person name="Christoffels A."/>
            <person name="Clutterbuck D.R."/>
            <person name="Crowe M.L."/>
            <person name="Dalla E."/>
            <person name="Dalrymple B.P."/>
            <person name="de Bono B."/>
            <person name="Della Gatta G."/>
            <person name="di Bernardo D."/>
            <person name="Down T."/>
            <person name="Engstrom P."/>
            <person name="Fagiolini M."/>
            <person name="Faulkner G."/>
            <person name="Fletcher C.F."/>
            <person name="Fukushima T."/>
            <person name="Furuno M."/>
            <person name="Futaki S."/>
            <person name="Gariboldi M."/>
            <person name="Georgii-Hemming P."/>
            <person name="Gingeras T.R."/>
            <person name="Gojobori T."/>
            <person name="Green R.E."/>
            <person name="Gustincich S."/>
            <person name="Harbers M."/>
            <person name="Hayashi Y."/>
            <person name="Hensch T.K."/>
            <person name="Hirokawa N."/>
            <person name="Hill D."/>
            <person name="Huminiecki L."/>
            <person name="Iacono M."/>
            <person name="Ikeo K."/>
            <person name="Iwama A."/>
            <person name="Ishikawa T."/>
            <person name="Jakt M."/>
            <person name="Kanapin A."/>
            <person name="Katoh M."/>
            <person name="Kawasawa Y."/>
            <person name="Kelso J."/>
            <person name="Kitamura H."/>
            <person name="Kitano H."/>
            <person name="Kollias G."/>
            <person name="Krishnan S.P."/>
            <person name="Kruger A."/>
            <person name="Kummerfeld S.K."/>
            <person name="Kurochkin I.V."/>
            <person name="Lareau L.F."/>
            <person name="Lazarevic D."/>
            <person name="Lipovich L."/>
            <person name="Liu J."/>
            <person name="Liuni S."/>
            <person name="McWilliam S."/>
            <person name="Madan Babu M."/>
            <person name="Madera M."/>
            <person name="Marchionni L."/>
            <person name="Matsuda H."/>
            <person name="Matsuzawa S."/>
            <person name="Miki H."/>
            <person name="Mignone F."/>
            <person name="Miyake S."/>
            <person name="Morris K."/>
            <person name="Mottagui-Tabar S."/>
            <person name="Mulder N."/>
            <person name="Nakano N."/>
            <person name="Nakauchi H."/>
            <person name="Ng P."/>
            <person name="Nilsson R."/>
            <person name="Nishiguchi S."/>
            <person name="Nishikawa S."/>
            <person name="Nori F."/>
            <person name="Ohara O."/>
            <person name="Okazaki Y."/>
            <person name="Orlando V."/>
            <person name="Pang K.C."/>
            <person name="Pavan W.J."/>
            <person name="Pavesi G."/>
            <person name="Pesole G."/>
            <person name="Petrovsky N."/>
            <person name="Piazza S."/>
            <person name="Reed J."/>
            <person name="Reid J.F."/>
            <person name="Ring B.Z."/>
            <person name="Ringwald M."/>
            <person name="Rost B."/>
            <person name="Ruan Y."/>
            <person name="Salzberg S.L."/>
            <person name="Sandelin A."/>
            <person name="Schneider C."/>
            <person name="Schoenbach C."/>
            <person name="Sekiguchi K."/>
            <person name="Semple C.A."/>
            <person name="Seno S."/>
            <person name="Sessa L."/>
            <person name="Sheng Y."/>
            <person name="Shibata Y."/>
            <person name="Shimada H."/>
            <person name="Shimada K."/>
            <person name="Silva D."/>
            <person name="Sinclair B."/>
            <person name="Sperling S."/>
            <person name="Stupka E."/>
            <person name="Sugiura K."/>
            <person name="Sultana R."/>
            <person name="Takenaka Y."/>
            <person name="Taki K."/>
            <person name="Tammoja K."/>
            <person name="Tan S.L."/>
            <person name="Tang S."/>
            <person name="Taylor M.S."/>
            <person name="Tegner J."/>
            <person name="Teichmann S.A."/>
            <person name="Ueda H.R."/>
            <person name="van Nimwegen E."/>
            <person name="Verardo R."/>
            <person name="Wei C.L."/>
            <person name="Yagi K."/>
            <person name="Yamanishi H."/>
            <person name="Zabarovsky E."/>
            <person name="Zhu S."/>
            <person name="Zimmer A."/>
            <person name="Hide W."/>
            <person name="Bult C."/>
            <person name="Grimmond S.M."/>
            <person name="Teasdale R.D."/>
            <person name="Liu E.T."/>
            <person name="Brusic V."/>
            <person name="Quackenbush J."/>
            <person name="Wahlestedt C."/>
            <person name="Mattick J.S."/>
            <person name="Hume D.A."/>
            <person name="Kai C."/>
            <person name="Sasaki D."/>
            <person name="Tomaru Y."/>
            <person name="Fukuda S."/>
            <person name="Kanamori-Katayama M."/>
            <person name="Suzuki M."/>
            <person name="Aoki J."/>
            <person name="Arakawa T."/>
            <person name="Iida J."/>
            <person name="Imamura K."/>
            <person name="Itoh M."/>
            <person name="Kato T."/>
            <person name="Kawaji H."/>
            <person name="Kawagashira N."/>
            <person name="Kawashima T."/>
            <person name="Kojima M."/>
            <person name="Kondo S."/>
            <person name="Konno H."/>
            <person name="Nakano K."/>
            <person name="Ninomiya N."/>
            <person name="Nishio T."/>
            <person name="Okada M."/>
            <person name="Plessy C."/>
            <person name="Shibata K."/>
            <person name="Shiraki T."/>
            <person name="Suzuki S."/>
            <person name="Tagami M."/>
            <person name="Waki K."/>
            <person name="Watahiki A."/>
            <person name="Okamura-Oho Y."/>
            <person name="Suzuki H."/>
            <person name="Kawai J."/>
            <person name="Hayashizaki Y."/>
        </authorList>
    </citation>
    <scope>NUCLEOTIDE SEQUENCE [LARGE SCALE MRNA]</scope>
    <source>
        <strain>C57BL/6J</strain>
        <tissue>Brain</tissue>
        <tissue>Cecum</tissue>
    </source>
</reference>
<reference key="3">
    <citation type="journal article" date="2009" name="PLoS Biol.">
        <title>Lineage-specific biology revealed by a finished genome assembly of the mouse.</title>
        <authorList>
            <person name="Church D.M."/>
            <person name="Goodstadt L."/>
            <person name="Hillier L.W."/>
            <person name="Zody M.C."/>
            <person name="Goldstein S."/>
            <person name="She X."/>
            <person name="Bult C.J."/>
            <person name="Agarwala R."/>
            <person name="Cherry J.L."/>
            <person name="DiCuccio M."/>
            <person name="Hlavina W."/>
            <person name="Kapustin Y."/>
            <person name="Meric P."/>
            <person name="Maglott D."/>
            <person name="Birtle Z."/>
            <person name="Marques A.C."/>
            <person name="Graves T."/>
            <person name="Zhou S."/>
            <person name="Teague B."/>
            <person name="Potamousis K."/>
            <person name="Churas C."/>
            <person name="Place M."/>
            <person name="Herschleb J."/>
            <person name="Runnheim R."/>
            <person name="Forrest D."/>
            <person name="Amos-Landgraf J."/>
            <person name="Schwartz D.C."/>
            <person name="Cheng Z."/>
            <person name="Lindblad-Toh K."/>
            <person name="Eichler E.E."/>
            <person name="Ponting C.P."/>
        </authorList>
    </citation>
    <scope>NUCLEOTIDE SEQUENCE [LARGE SCALE GENOMIC DNA]</scope>
    <source>
        <strain>C57BL/6J</strain>
    </source>
</reference>
<reference key="4">
    <citation type="journal article" date="2002" name="DNA Res.">
        <title>Prediction of the coding sequences of mouse homologues of KIAA gene: I. The complete nucleotide sequences of 100 mouse KIAA-homologous cDNAs identified by screening of terminal sequences of cDNA clones randomly sampled from size-fractionated libraries.</title>
        <authorList>
            <person name="Okazaki N."/>
            <person name="Kikuno R."/>
            <person name="Ohara R."/>
            <person name="Inamoto S."/>
            <person name="Hara Y."/>
            <person name="Nagase T."/>
            <person name="Ohara O."/>
            <person name="Koga H."/>
        </authorList>
    </citation>
    <scope>NUCLEOTIDE SEQUENCE [LARGE SCALE MRNA] OF 1004-1954</scope>
    <source>
        <tissue>Embryonic tail</tissue>
    </source>
</reference>
<sequence length="1954" mass="216927">MGNSYAGQLKSTRFEEVLHNSIEASLRSNTLVPRPIFSQLYLEAEQQLSSLEGGSRADNEEEEEDGEGGLEPSSPPNAYQLPPPPEGCCTTDGFCQAGKDLRLVSISSEPIEVPAGFLLVGAKSPSLPDHLLVCAVDKRFLPDDNGHNALLGFSGNCVGCGKKGFCYFTEFSNHINLKLTTQPKKQKHLKYYLVRNAQGALTKGPLICWKGSEFRGRQNSTNTCSSSLFPPLESSGSLAAFPTEPVPGTNPSVPVGAQQAGPASDHPSVTTATGPAVFNGKDSPKHPQLVKSSLSALPRPSALGILPNSGPPKKRHKGWSPESKSTTDGGFIQGGGNRAKHEGTSIPCVPQAGLVGPASVTFPVVASGEPVSVPDNLLKICKAKPVIFKGHGNFPYLCGNLNDVVVSPLLYTCYQNSQSLARAYEQHGASTMQPISEETQLLLTVYYLVQLAADQVPLMEDLEQIFLRSWRESHLTEIRQYQQAPPQPFPPATSTAAPVTSAQLPWLAGLAASSCNDSVHVIECAYSLAEGLSEMFRLLIEGKLSKTNYVVIICACRNAAIDSCIAVTGKYQARILSESLLSPAEYQREVHYELVTGKVDSLGTFFSSLCPEGDIDILLDKFHQENQGHVSSSFTASSTKKTAVLDASGVPVCTSYHQEPRGVRPFQLAVAQKLLSHVCSIADSSTQNLDLGSFEKVDFLICIPPSEVTYQQTVFHVWHSGVLLELGLEKEPVTKQRAEQHVLKLDTEAQARFKAFLQNSFQNPHTLFVLIHDHAHWDLVSSAVHNIYSQSDPSVGLVDRLLNCREVKEAPNIVTLHVTSFPYALQTQHTLISPYNEIHWPISFSNGVDLYHESKKYFGLSEFIDSTLSGHSLPLLRYDSSFEAMVTALGKRFPRLHSAVIRTFVLVQHYAAAMMAVSGLPQMKNHTSVETLEITQNLLNSPKQCPCGHGLMVLLRVPCSPLAAVAYERLAHVRARLALEEHFEIILGHPSSGITVGKHFVKQLKMWQKIEDAEWRPQTYLELEGLPCILIFSGMDPHGESLPRSLRYCDLRLINSSCLVRTALEQELGLAAYFVSNDIPLEKGPKNEALESDGEKLSSTDEDEEAGTEGCFEAGSTSEQRGPVKRERSHSHDSASSSLSSRASGSVLYGESLAQPSGPPQGELTRSPPSCGPAEEGRAPGEIQRLRVSQGSTVISRHSPGLVPQPDSSLRTGRRSLQVPAAPSSQLSSSSGSSSTCAVPTANVLVLQASQCSMAKACRQPPIVFLPKLVYDMLLSTDSSGLPKSASLLPSPSVMWTSSFRPLLSKMMTSTEQSLYYRQWTVPRPSHMDYGNRAEGRVDSFHPRRLLLSGPPQIGKTGAYLQFLSILSRMLIRLTEVDVYDEEEINTSFREESEWRYLQLADPWPDLELFQKMPFDYIIHDPKYEDASLICSHPQTIKSEDRGMSRKPEDLYVRRQTARMRLSKYAAYNTYHHCEQCQQYMGFHPHYQLSESTLHVFAFSCSMLGEEVQLHFIIPKSKEHHFVFSQPGGQLESMRLPLVTDKSHEHIKSPTFTPTTGRHEHGLFNLYHAMDGANHLHVLVVKEYEMAIYKKYWPNHIMLVLPSIFNSAGVGAAHFLIKELCYHNLELERNRQEELGVKPQDVWPFIVIADDSCVMWNVADVDCAGERSREFSWSERNVSLKYIMLHIEASPNITHYALLGMRKWASKTRGREVQEPFSRCHVHDFIILNVDLTQNVQYNQNRFTCDDVDFNLRVHSAGLLLCRFNRFSVMKKQIAVGGHRSFHITSKVSDSSVAIVPSQYICAPDSKHTFLAAPAQLLLEKFLQYHSHRFFPLSLKNHSHPVLSVDCYLNLGPQISVCYVSSRPHSLNISCSDMVFSGLLLYLCDSFVGASFLKKFHFLKGATLCVICQDRNSLRQTVVRLELEDEWQFRLRDEFQTANAKEDRPLFFLTARHI</sequence>
<accession>Q3UHK3</accession>
<accession>E0CYB3</accession>
<accession>Q8BZT6</accession>
<accession>Q8CHE7</accession>
<accession>Q9JLG7</accession>
<gene>
    <name type="primary">Greb1</name>
    <name type="synonym">Kiaa0575</name>
</gene>
<organism>
    <name type="scientific">Mus musculus</name>
    <name type="common">Mouse</name>
    <dbReference type="NCBI Taxonomy" id="10090"/>
    <lineage>
        <taxon>Eukaryota</taxon>
        <taxon>Metazoa</taxon>
        <taxon>Chordata</taxon>
        <taxon>Craniata</taxon>
        <taxon>Vertebrata</taxon>
        <taxon>Euteleostomi</taxon>
        <taxon>Mammalia</taxon>
        <taxon>Eutheria</taxon>
        <taxon>Euarchontoglires</taxon>
        <taxon>Glires</taxon>
        <taxon>Rodentia</taxon>
        <taxon>Myomorpha</taxon>
        <taxon>Muroidea</taxon>
        <taxon>Muridae</taxon>
        <taxon>Murinae</taxon>
        <taxon>Mus</taxon>
        <taxon>Mus</taxon>
    </lineage>
</organism>
<keyword id="KW-0472">Membrane</keyword>
<keyword id="KW-1185">Reference proteome</keyword>
<keyword id="KW-0812">Transmembrane</keyword>
<keyword id="KW-1133">Transmembrane helix</keyword>
<comment type="function">
    <text evidence="1">May play a role in estrogen-stimulated cell proliferation.</text>
</comment>
<comment type="subcellular location">
    <subcellularLocation>
        <location evidence="2">Membrane</location>
        <topology evidence="2">Single-pass membrane protein</topology>
    </subcellularLocation>
</comment>
<comment type="similarity">
    <text evidence="4">Belongs to the GREB1 family.</text>
</comment>
<comment type="sequence caution" evidence="4">
    <conflict type="miscellaneous discrepancy">
        <sequence resource="EMBL-CDS" id="BAC41432"/>
    </conflict>
    <text>Partially unspliced pre-RNA.</text>
</comment>
<feature type="chain" id="PRO_0000320945" description="Protein GREB1">
    <location>
        <begin position="1"/>
        <end position="1954"/>
    </location>
</feature>
<feature type="transmembrane region" description="Helical" evidence="2">
    <location>
        <begin position="1873"/>
        <end position="1893"/>
    </location>
</feature>
<feature type="region of interest" description="Disordered" evidence="3">
    <location>
        <begin position="48"/>
        <end position="83"/>
    </location>
</feature>
<feature type="region of interest" description="Disordered" evidence="3">
    <location>
        <begin position="238"/>
        <end position="342"/>
    </location>
</feature>
<feature type="region of interest" description="Disordered" evidence="3">
    <location>
        <begin position="1083"/>
        <end position="1235"/>
    </location>
</feature>
<feature type="compositionally biased region" description="Acidic residues" evidence="3">
    <location>
        <begin position="59"/>
        <end position="68"/>
    </location>
</feature>
<feature type="compositionally biased region" description="Low complexity" evidence="3">
    <location>
        <begin position="292"/>
        <end position="303"/>
    </location>
</feature>
<feature type="compositionally biased region" description="Basic and acidic residues" evidence="3">
    <location>
        <begin position="1083"/>
        <end position="1099"/>
    </location>
</feature>
<feature type="compositionally biased region" description="Basic and acidic residues" evidence="3">
    <location>
        <begin position="1122"/>
        <end position="1133"/>
    </location>
</feature>
<feature type="compositionally biased region" description="Low complexity" evidence="3">
    <location>
        <begin position="1134"/>
        <end position="1146"/>
    </location>
</feature>
<feature type="compositionally biased region" description="Polar residues" evidence="3">
    <location>
        <begin position="1187"/>
        <end position="1196"/>
    </location>
</feature>
<feature type="compositionally biased region" description="Low complexity" evidence="3">
    <location>
        <begin position="1224"/>
        <end position="1235"/>
    </location>
</feature>
<feature type="sequence conflict" description="In Ref. 1; AAF44295 and 2; BAE27854." evidence="4" ref="1 2">
    <original>P</original>
    <variation>T</variation>
    <location>
        <position position="230"/>
    </location>
</feature>
<feature type="sequence conflict" description="In Ref. 1; AAF44295." evidence="4" ref="1">
    <original>A</original>
    <variation>V</variation>
    <location>
        <position position="260"/>
    </location>
</feature>
<feature type="sequence conflict" description="In Ref. 1; AAF44295." evidence="4" ref="1">
    <original>V</original>
    <variation>A</variation>
    <location>
        <position position="360"/>
    </location>
</feature>
<feature type="sequence conflict" description="In Ref. 2; BAE27854." evidence="4" ref="2">
    <original>E</original>
    <variation>G</variation>
    <location>
        <position position="659"/>
    </location>
</feature>
<feature type="sequence conflict" description="In Ref. 1; AAF44295." evidence="4" ref="1">
    <original>F</original>
    <variation>Y</variation>
    <location>
        <position position="844"/>
    </location>
</feature>
<feature type="sequence conflict" description="In Ref. 1; AAF44295, 2; BAE27854 and 4; BAC41432." evidence="4" ref="1 2 4">
    <original>A</original>
    <variation>V</variation>
    <location>
        <position position="1154"/>
    </location>
</feature>
<feature type="sequence conflict" description="In Ref. 1; AAF44295, 2; BAE27854 and 4; BAC41432." evidence="4" ref="1 2 4">
    <original>S</original>
    <variation>P</variation>
    <location>
        <position position="1170"/>
    </location>
</feature>
<feature type="sequence conflict" description="In Ref. 1; AAF44295 and 2; BAE27854." evidence="4" ref="1 2">
    <original>G</original>
    <variation>D</variation>
    <location>
        <position position="1201"/>
    </location>
</feature>
<feature type="sequence conflict" description="In Ref. 1; AAF44295." evidence="4" ref="1">
    <original>Y</original>
    <variation>C</variation>
    <location>
        <position position="1417"/>
    </location>
</feature>
<feature type="sequence conflict" description="In Ref. 2; BAC28368." evidence="4" ref="2">
    <original>D</original>
    <variation>N</variation>
    <location>
        <position position="1749"/>
    </location>
</feature>
<name>GREB1_MOUSE</name>
<dbReference type="EMBL" id="AF180470">
    <property type="protein sequence ID" value="AAF44295.1"/>
    <property type="molecule type" value="mRNA"/>
</dbReference>
<dbReference type="EMBL" id="AK033573">
    <property type="protein sequence ID" value="BAC28368.1"/>
    <property type="molecule type" value="mRNA"/>
</dbReference>
<dbReference type="EMBL" id="AK147337">
    <property type="protein sequence ID" value="BAE27854.1"/>
    <property type="molecule type" value="mRNA"/>
</dbReference>
<dbReference type="EMBL" id="AC122228">
    <property type="status" value="NOT_ANNOTATED_CDS"/>
    <property type="molecule type" value="Genomic_DNA"/>
</dbReference>
<dbReference type="EMBL" id="AC157352">
    <property type="status" value="NOT_ANNOTATED_CDS"/>
    <property type="molecule type" value="Genomic_DNA"/>
</dbReference>
<dbReference type="EMBL" id="AB093248">
    <property type="protein sequence ID" value="BAC41432.2"/>
    <property type="status" value="ALT_SEQ"/>
    <property type="molecule type" value="Transcribed_RNA"/>
</dbReference>
<dbReference type="CCDS" id="CCDS36408.1"/>
<dbReference type="RefSeq" id="NP_056579.2">
    <property type="nucleotide sequence ID" value="NM_015764.4"/>
</dbReference>
<dbReference type="RefSeq" id="XP_006515156.1">
    <property type="nucleotide sequence ID" value="XM_006515093.4"/>
</dbReference>
<dbReference type="RefSeq" id="XP_006515157.1">
    <property type="nucleotide sequence ID" value="XM_006515094.3"/>
</dbReference>
<dbReference type="RefSeq" id="XP_006515158.1">
    <property type="nucleotide sequence ID" value="XM_006515095.3"/>
</dbReference>
<dbReference type="RefSeq" id="XP_006515159.1">
    <property type="nucleotide sequence ID" value="XM_006515096.4"/>
</dbReference>
<dbReference type="RefSeq" id="XP_006515160.1">
    <property type="nucleotide sequence ID" value="XM_006515097.3"/>
</dbReference>
<dbReference type="RefSeq" id="XP_006515161.1">
    <property type="nucleotide sequence ID" value="XM_006515098.2"/>
</dbReference>
<dbReference type="FunCoup" id="Q3UHK3">
    <property type="interactions" value="61"/>
</dbReference>
<dbReference type="STRING" id="10090.ENSMUSP00000124348"/>
<dbReference type="iPTMnet" id="Q3UHK3"/>
<dbReference type="PhosphoSitePlus" id="Q3UHK3"/>
<dbReference type="jPOST" id="Q3UHK3"/>
<dbReference type="PaxDb" id="10090-ENSMUSP00000124348"/>
<dbReference type="ProteomicsDB" id="271159"/>
<dbReference type="Antibodypedia" id="26843">
    <property type="antibodies" value="162 antibodies from 23 providers"/>
</dbReference>
<dbReference type="DNASU" id="268527"/>
<dbReference type="Ensembl" id="ENSMUST00000048064.16">
    <property type="protein sequence ID" value="ENSMUSP00000044454.10"/>
    <property type="gene ID" value="ENSMUSG00000036523.17"/>
</dbReference>
<dbReference type="Ensembl" id="ENSMUST00000162112.8">
    <property type="protein sequence ID" value="ENSMUSP00000124348.2"/>
    <property type="gene ID" value="ENSMUSG00000036523.17"/>
</dbReference>
<dbReference type="GeneID" id="268527"/>
<dbReference type="KEGG" id="mmu:268527"/>
<dbReference type="UCSC" id="uc029rrb.1">
    <property type="organism name" value="mouse"/>
</dbReference>
<dbReference type="AGR" id="MGI:2149712"/>
<dbReference type="CTD" id="9687"/>
<dbReference type="MGI" id="MGI:2149712">
    <property type="gene designation" value="Greb1"/>
</dbReference>
<dbReference type="VEuPathDB" id="HostDB:ENSMUSG00000036523"/>
<dbReference type="eggNOG" id="ENOG502QQXD">
    <property type="taxonomic scope" value="Eukaryota"/>
</dbReference>
<dbReference type="GeneTree" id="ENSGT00390000008041"/>
<dbReference type="HOGENOM" id="CLU_237163_0_0_1"/>
<dbReference type="InParanoid" id="Q3UHK3"/>
<dbReference type="OMA" id="SEYSVEW"/>
<dbReference type="OrthoDB" id="9989163at2759"/>
<dbReference type="PhylomeDB" id="Q3UHK3"/>
<dbReference type="TreeFam" id="TF329531"/>
<dbReference type="Reactome" id="R-MMU-9018519">
    <property type="pathway name" value="Estrogen-dependent gene expression"/>
</dbReference>
<dbReference type="BioGRID-ORCS" id="268527">
    <property type="hits" value="4 hits in 80 CRISPR screens"/>
</dbReference>
<dbReference type="ChiTaRS" id="Greb1">
    <property type="organism name" value="mouse"/>
</dbReference>
<dbReference type="PRO" id="PR:Q3UHK3"/>
<dbReference type="Proteomes" id="UP000000589">
    <property type="component" value="Chromosome 12"/>
</dbReference>
<dbReference type="RNAct" id="Q3UHK3">
    <property type="molecule type" value="protein"/>
</dbReference>
<dbReference type="Bgee" id="ENSMUSG00000036523">
    <property type="expression patterns" value="Expressed in embryonic post-anal tail and 142 other cell types or tissues"/>
</dbReference>
<dbReference type="ExpressionAtlas" id="Q3UHK3">
    <property type="expression patterns" value="baseline and differential"/>
</dbReference>
<dbReference type="GO" id="GO:0016020">
    <property type="term" value="C:membrane"/>
    <property type="evidence" value="ECO:0007669"/>
    <property type="project" value="UniProtKB-SubCell"/>
</dbReference>
<dbReference type="InterPro" id="IPR028422">
    <property type="entry name" value="GREB1"/>
</dbReference>
<dbReference type="InterPro" id="IPR048659">
    <property type="entry name" value="GREB1-like_2nd"/>
</dbReference>
<dbReference type="InterPro" id="IPR046927">
    <property type="entry name" value="GREB1-like_C"/>
</dbReference>
<dbReference type="InterPro" id="IPR048657">
    <property type="entry name" value="GREB1-like_cpSF2"/>
</dbReference>
<dbReference type="InterPro" id="IPR046926">
    <property type="entry name" value="GREB1_N"/>
</dbReference>
<dbReference type="InterPro" id="IPR049100">
    <property type="entry name" value="TAGT"/>
</dbReference>
<dbReference type="PANTHER" id="PTHR15720">
    <property type="entry name" value="GREB1-RELATED"/>
    <property type="match status" value="1"/>
</dbReference>
<dbReference type="PANTHER" id="PTHR15720:SF13">
    <property type="entry name" value="PROTEIN GREB1"/>
    <property type="match status" value="1"/>
</dbReference>
<dbReference type="Pfam" id="PF20692">
    <property type="entry name" value="cpSF2-GREB1"/>
    <property type="match status" value="1"/>
</dbReference>
<dbReference type="Pfam" id="PF20688">
    <property type="entry name" value="GREB1_2nd"/>
    <property type="match status" value="1"/>
</dbReference>
<dbReference type="Pfam" id="PF20267">
    <property type="entry name" value="GREB1_C"/>
    <property type="match status" value="1"/>
</dbReference>
<dbReference type="Pfam" id="PF15782">
    <property type="entry name" value="GREB1_N"/>
    <property type="match status" value="1"/>
</dbReference>
<dbReference type="Pfam" id="PF20691">
    <property type="entry name" value="TAGT"/>
    <property type="match status" value="1"/>
</dbReference>
<evidence type="ECO:0000250" key="1"/>
<evidence type="ECO:0000255" key="2"/>
<evidence type="ECO:0000256" key="3">
    <source>
        <dbReference type="SAM" id="MobiDB-lite"/>
    </source>
</evidence>
<evidence type="ECO:0000305" key="4"/>
<proteinExistence type="evidence at transcript level"/>